<organism>
    <name type="scientific">Xenopus laevis</name>
    <name type="common">African clawed frog</name>
    <dbReference type="NCBI Taxonomy" id="8355"/>
    <lineage>
        <taxon>Eukaryota</taxon>
        <taxon>Metazoa</taxon>
        <taxon>Chordata</taxon>
        <taxon>Craniata</taxon>
        <taxon>Vertebrata</taxon>
        <taxon>Euteleostomi</taxon>
        <taxon>Amphibia</taxon>
        <taxon>Batrachia</taxon>
        <taxon>Anura</taxon>
        <taxon>Pipoidea</taxon>
        <taxon>Pipidae</taxon>
        <taxon>Xenopodinae</taxon>
        <taxon>Xenopus</taxon>
        <taxon>Xenopus</taxon>
    </lineage>
</organism>
<protein>
    <recommendedName>
        <fullName>Protein NDRG4-B</fullName>
    </recommendedName>
</protein>
<feature type="chain" id="PRO_0000232433" description="Protein NDRG4-B">
    <location>
        <begin position="1"/>
        <end position="367"/>
    </location>
</feature>
<feature type="region of interest" description="Disordered" evidence="3">
    <location>
        <begin position="1"/>
        <end position="21"/>
    </location>
</feature>
<feature type="region of interest" description="Disordered" evidence="3">
    <location>
        <begin position="333"/>
        <end position="367"/>
    </location>
</feature>
<feature type="compositionally biased region" description="Basic and acidic residues" evidence="3">
    <location>
        <begin position="1"/>
        <end position="12"/>
    </location>
</feature>
<feature type="compositionally biased region" description="Polar residues" evidence="3">
    <location>
        <begin position="347"/>
        <end position="367"/>
    </location>
</feature>
<evidence type="ECO:0000250" key="1"/>
<evidence type="ECO:0000255" key="2"/>
<evidence type="ECO:0000256" key="3">
    <source>
        <dbReference type="SAM" id="MobiDB-lite"/>
    </source>
</evidence>
<evidence type="ECO:0000312" key="4">
    <source>
        <dbReference type="EMBL" id="AAH75249.1"/>
    </source>
</evidence>
<proteinExistence type="evidence at transcript level"/>
<keyword id="KW-0963">Cytoplasm</keyword>
<keyword id="KW-1185">Reference proteome</keyword>
<accession>Q6DJD3</accession>
<comment type="function">
    <text evidence="1">Contributes to the maintenance of intracerebral BDNF levels within the normal range. May enhance growth factor-induced ERK1 and ERK2 phosphorylation. May attenuate growth factor-promoted ELK1 phosphorylation in a microtubule-dependent manner (By similarity).</text>
</comment>
<comment type="subcellular location">
    <subcellularLocation>
        <location evidence="1">Cytoplasm</location>
        <location evidence="1">Cytosol</location>
    </subcellularLocation>
</comment>
<comment type="similarity">
    <text evidence="2">Belongs to the NDRG family.</text>
</comment>
<name>NDR4B_XENLA</name>
<gene>
    <name type="primary">ndrg4-b</name>
</gene>
<sequence length="367" mass="40557">MSELRFPEEKPLLRGQDTEMESADTFMSAADTDWKEHDIETPYGMLHVVIRGTPKGNRPAILTYHDVGLNHKLCFNTFFNYEDMQEITKHFVVCHVDAPGQQVGASQFPQGYQYPTMEQLAAMLPSVMQHFGFQSIIGIGVGAGAYVFAKFALIFPELVEGMVLINIDPNGKGWIDWAASKLSGLTSSLPETVLSHLFSQEELMNNTELVQNYRQQISSCVNQSNLQLFWNMYNSRRDLEMSRPGTVPNAKTLRAPVMLVVGDNAPAEDSVVECNSKLDPTNTTFLKMADSGGLPQVTQPGKLTEAFKYFLQGMGYMPSASMTRLARSRTASLTSASSVDGARPRPCTQSESSDGIGQINHTMEVSC</sequence>
<dbReference type="EMBL" id="BC075249">
    <property type="protein sequence ID" value="AAH75249.1"/>
    <property type="molecule type" value="mRNA"/>
</dbReference>
<dbReference type="RefSeq" id="NP_001086410.1">
    <property type="nucleotide sequence ID" value="NM_001092941.1"/>
</dbReference>
<dbReference type="SMR" id="Q6DJD3"/>
<dbReference type="ESTHER" id="xenla-ndr4b">
    <property type="family name" value="Ndr_family"/>
</dbReference>
<dbReference type="DNASU" id="444839"/>
<dbReference type="GeneID" id="444839"/>
<dbReference type="KEGG" id="xla:444839"/>
<dbReference type="AGR" id="Xenbase:XB-GENE-6254158"/>
<dbReference type="CTD" id="444839"/>
<dbReference type="Xenbase" id="XB-GENE-6254158">
    <property type="gene designation" value="ndrg4.L"/>
</dbReference>
<dbReference type="OMA" id="EHPPDFE"/>
<dbReference type="OrthoDB" id="191979at2759"/>
<dbReference type="Proteomes" id="UP000186698">
    <property type="component" value="Chromosome 4L"/>
</dbReference>
<dbReference type="Bgee" id="444839">
    <property type="expression patterns" value="Expressed in brain and 19 other cell types or tissues"/>
</dbReference>
<dbReference type="GO" id="GO:0005737">
    <property type="term" value="C:cytoplasm"/>
    <property type="evidence" value="ECO:0000318"/>
    <property type="project" value="GO_Central"/>
</dbReference>
<dbReference type="GO" id="GO:0005829">
    <property type="term" value="C:cytosol"/>
    <property type="evidence" value="ECO:0007669"/>
    <property type="project" value="UniProtKB-SubCell"/>
</dbReference>
<dbReference type="GO" id="GO:0070374">
    <property type="term" value="P:positive regulation of ERK1 and ERK2 cascade"/>
    <property type="evidence" value="ECO:0000318"/>
    <property type="project" value="GO_Central"/>
</dbReference>
<dbReference type="GO" id="GO:0007165">
    <property type="term" value="P:signal transduction"/>
    <property type="evidence" value="ECO:0000318"/>
    <property type="project" value="GO_Central"/>
</dbReference>
<dbReference type="FunFam" id="3.40.50.1820:FF:000009">
    <property type="entry name" value="NDRG family member 4"/>
    <property type="match status" value="1"/>
</dbReference>
<dbReference type="Gene3D" id="3.40.50.1820">
    <property type="entry name" value="alpha/beta hydrolase"/>
    <property type="match status" value="1"/>
</dbReference>
<dbReference type="InterPro" id="IPR029058">
    <property type="entry name" value="AB_hydrolase_fold"/>
</dbReference>
<dbReference type="InterPro" id="IPR004142">
    <property type="entry name" value="NDRG"/>
</dbReference>
<dbReference type="PANTHER" id="PTHR11034">
    <property type="entry name" value="N-MYC DOWNSTREAM REGULATED"/>
    <property type="match status" value="1"/>
</dbReference>
<dbReference type="Pfam" id="PF03096">
    <property type="entry name" value="Ndr"/>
    <property type="match status" value="1"/>
</dbReference>
<dbReference type="SUPFAM" id="SSF53474">
    <property type="entry name" value="alpha/beta-Hydrolases"/>
    <property type="match status" value="1"/>
</dbReference>
<reference evidence="4" key="1">
    <citation type="submission" date="2004-06" db="EMBL/GenBank/DDBJ databases">
        <authorList>
            <consortium name="NIH - Xenopus Gene Collection (XGC) project"/>
        </authorList>
    </citation>
    <scope>NUCLEOTIDE SEQUENCE [LARGE SCALE MRNA]</scope>
    <source>
        <tissue evidence="4">Eye</tissue>
    </source>
</reference>